<name>NUDJ_SHISS</name>
<sequence>MFKPHVTVACVVHAEGKFLVVEETINGKALWNQPAGHLEADETLVEAAARELWEETGISAQPQHFIRMHQWIAPDKTPFLRFLFAIELEQICPTQPHDSDIDCCRWVSAEEILKASNLRSPLVAESIRCYQSGQRYPLEMIGDFNWPFTKGVI</sequence>
<organism>
    <name type="scientific">Shigella sonnei (strain Ss046)</name>
    <dbReference type="NCBI Taxonomy" id="300269"/>
    <lineage>
        <taxon>Bacteria</taxon>
        <taxon>Pseudomonadati</taxon>
        <taxon>Pseudomonadota</taxon>
        <taxon>Gammaproteobacteria</taxon>
        <taxon>Enterobacterales</taxon>
        <taxon>Enterobacteriaceae</taxon>
        <taxon>Shigella</taxon>
    </lineage>
</organism>
<protein>
    <recommendedName>
        <fullName>Phosphatase NudJ</fullName>
        <ecNumber>3.6.1.-</ecNumber>
    </recommendedName>
</protein>
<evidence type="ECO:0000250" key="1"/>
<evidence type="ECO:0000255" key="2">
    <source>
        <dbReference type="PROSITE-ProRule" id="PRU00794"/>
    </source>
</evidence>
<evidence type="ECO:0000305" key="3"/>
<reference key="1">
    <citation type="journal article" date="2005" name="Nucleic Acids Res.">
        <title>Genome dynamics and diversity of Shigella species, the etiologic agents of bacillary dysentery.</title>
        <authorList>
            <person name="Yang F."/>
            <person name="Yang J."/>
            <person name="Zhang X."/>
            <person name="Chen L."/>
            <person name="Jiang Y."/>
            <person name="Yan Y."/>
            <person name="Tang X."/>
            <person name="Wang J."/>
            <person name="Xiong Z."/>
            <person name="Dong J."/>
            <person name="Xue Y."/>
            <person name="Zhu Y."/>
            <person name="Xu X."/>
            <person name="Sun L."/>
            <person name="Chen S."/>
            <person name="Nie H."/>
            <person name="Peng J."/>
            <person name="Xu J."/>
            <person name="Wang Y."/>
            <person name="Yuan Z."/>
            <person name="Wen Y."/>
            <person name="Yao Z."/>
            <person name="Shen Y."/>
            <person name="Qiang B."/>
            <person name="Hou Y."/>
            <person name="Yu J."/>
            <person name="Jin Q."/>
        </authorList>
    </citation>
    <scope>NUCLEOTIDE SEQUENCE [LARGE SCALE GENOMIC DNA]</scope>
    <source>
        <strain>Ss046</strain>
    </source>
</reference>
<keyword id="KW-0378">Hydrolase</keyword>
<keyword id="KW-0460">Magnesium</keyword>
<keyword id="KW-1185">Reference proteome</keyword>
<proteinExistence type="inferred from homology"/>
<gene>
    <name type="primary">nudJ</name>
    <name type="ordered locus">SSON_1152</name>
</gene>
<accession>Q3Z2Y5</accession>
<comment type="cofactor">
    <cofactor evidence="1">
        <name>Mg(2+)</name>
        <dbReference type="ChEBI" id="CHEBI:18420"/>
    </cofactor>
</comment>
<comment type="subunit">
    <text evidence="1">Monomer.</text>
</comment>
<comment type="similarity">
    <text evidence="3">Belongs to the Nudix hydrolase family. NudJ subfamily.</text>
</comment>
<feature type="chain" id="PRO_0000342648" description="Phosphatase NudJ">
    <location>
        <begin position="1"/>
        <end position="153"/>
    </location>
</feature>
<feature type="domain" description="Nudix hydrolase" evidence="2">
    <location>
        <begin position="3"/>
        <end position="131"/>
    </location>
</feature>
<feature type="short sequence motif" description="Nudix box">
    <location>
        <begin position="36"/>
        <end position="57"/>
    </location>
</feature>
<dbReference type="EC" id="3.6.1.-"/>
<dbReference type="EMBL" id="CP000038">
    <property type="protein sequence ID" value="AAZ87877.1"/>
    <property type="molecule type" value="Genomic_DNA"/>
</dbReference>
<dbReference type="RefSeq" id="WP_000476089.1">
    <property type="nucleotide sequence ID" value="NC_007384.1"/>
</dbReference>
<dbReference type="SMR" id="Q3Z2Y5"/>
<dbReference type="GeneID" id="93776276"/>
<dbReference type="KEGG" id="ssn:SSON_1152"/>
<dbReference type="HOGENOM" id="CLU_037162_6_1_6"/>
<dbReference type="Proteomes" id="UP000002529">
    <property type="component" value="Chromosome"/>
</dbReference>
<dbReference type="GO" id="GO:0017110">
    <property type="term" value="F:nucleoside diphosphate phosphatase activity"/>
    <property type="evidence" value="ECO:0007669"/>
    <property type="project" value="InterPro"/>
</dbReference>
<dbReference type="GO" id="GO:0017111">
    <property type="term" value="F:ribonucleoside triphosphate phosphatase activity"/>
    <property type="evidence" value="ECO:0007669"/>
    <property type="project" value="InterPro"/>
</dbReference>
<dbReference type="GO" id="GO:0004787">
    <property type="term" value="F:thiamine diphosphate phosphatase activity"/>
    <property type="evidence" value="ECO:0007669"/>
    <property type="project" value="InterPro"/>
</dbReference>
<dbReference type="CDD" id="cd03675">
    <property type="entry name" value="NUDIX_Hydrolase"/>
    <property type="match status" value="1"/>
</dbReference>
<dbReference type="FunFam" id="3.90.79.10:FF:000017">
    <property type="entry name" value="Phosphatase NudJ"/>
    <property type="match status" value="1"/>
</dbReference>
<dbReference type="Gene3D" id="3.90.79.10">
    <property type="entry name" value="Nucleoside Triphosphate Pyrophosphohydrolase"/>
    <property type="match status" value="1"/>
</dbReference>
<dbReference type="InterPro" id="IPR020476">
    <property type="entry name" value="Nudix_hydrolase"/>
</dbReference>
<dbReference type="InterPro" id="IPR015797">
    <property type="entry name" value="NUDIX_hydrolase-like_dom_sf"/>
</dbReference>
<dbReference type="InterPro" id="IPR020084">
    <property type="entry name" value="NUDIX_hydrolase_CS"/>
</dbReference>
<dbReference type="InterPro" id="IPR000086">
    <property type="entry name" value="NUDIX_hydrolase_dom"/>
</dbReference>
<dbReference type="InterPro" id="IPR033713">
    <property type="entry name" value="NudJ"/>
</dbReference>
<dbReference type="PANTHER" id="PTHR43222">
    <property type="entry name" value="NUDIX HYDROLASE 23"/>
    <property type="match status" value="1"/>
</dbReference>
<dbReference type="PANTHER" id="PTHR43222:SF11">
    <property type="entry name" value="PHOSPHATASE NUDJ"/>
    <property type="match status" value="1"/>
</dbReference>
<dbReference type="Pfam" id="PF00293">
    <property type="entry name" value="NUDIX"/>
    <property type="match status" value="1"/>
</dbReference>
<dbReference type="PRINTS" id="PR00502">
    <property type="entry name" value="NUDIXFAMILY"/>
</dbReference>
<dbReference type="SUPFAM" id="SSF55811">
    <property type="entry name" value="Nudix"/>
    <property type="match status" value="1"/>
</dbReference>
<dbReference type="PROSITE" id="PS51462">
    <property type="entry name" value="NUDIX"/>
    <property type="match status" value="1"/>
</dbReference>
<dbReference type="PROSITE" id="PS00893">
    <property type="entry name" value="NUDIX_BOX"/>
    <property type="match status" value="1"/>
</dbReference>